<dbReference type="EC" id="7.1.1.-" evidence="1"/>
<dbReference type="EMBL" id="AE017126">
    <property type="protein sequence ID" value="AAP99219.1"/>
    <property type="molecule type" value="Genomic_DNA"/>
</dbReference>
<dbReference type="RefSeq" id="NP_874567.1">
    <property type="nucleotide sequence ID" value="NC_005042.1"/>
</dbReference>
<dbReference type="RefSeq" id="WP_011124328.1">
    <property type="nucleotide sequence ID" value="NC_005042.1"/>
</dbReference>
<dbReference type="SMR" id="Q7VE41"/>
<dbReference type="STRING" id="167539.Pro_0173"/>
<dbReference type="EnsemblBacteria" id="AAP99219">
    <property type="protein sequence ID" value="AAP99219"/>
    <property type="gene ID" value="Pro_0173"/>
</dbReference>
<dbReference type="KEGG" id="pma:Pro_0173"/>
<dbReference type="PATRIC" id="fig|167539.5.peg.179"/>
<dbReference type="eggNOG" id="COG1008">
    <property type="taxonomic scope" value="Bacteria"/>
</dbReference>
<dbReference type="HOGENOM" id="CLU_007100_4_0_3"/>
<dbReference type="OrthoDB" id="9811718at2"/>
<dbReference type="Proteomes" id="UP000001420">
    <property type="component" value="Chromosome"/>
</dbReference>
<dbReference type="GO" id="GO:0031676">
    <property type="term" value="C:plasma membrane-derived thylakoid membrane"/>
    <property type="evidence" value="ECO:0007669"/>
    <property type="project" value="UniProtKB-SubCell"/>
</dbReference>
<dbReference type="GO" id="GO:0008137">
    <property type="term" value="F:NADH dehydrogenase (ubiquinone) activity"/>
    <property type="evidence" value="ECO:0007669"/>
    <property type="project" value="InterPro"/>
</dbReference>
<dbReference type="GO" id="GO:0048039">
    <property type="term" value="F:ubiquinone binding"/>
    <property type="evidence" value="ECO:0007669"/>
    <property type="project" value="TreeGrafter"/>
</dbReference>
<dbReference type="GO" id="GO:0042773">
    <property type="term" value="P:ATP synthesis coupled electron transport"/>
    <property type="evidence" value="ECO:0007669"/>
    <property type="project" value="InterPro"/>
</dbReference>
<dbReference type="GO" id="GO:0015990">
    <property type="term" value="P:electron transport coupled proton transport"/>
    <property type="evidence" value="ECO:0007669"/>
    <property type="project" value="TreeGrafter"/>
</dbReference>
<dbReference type="HAMAP" id="MF_00491">
    <property type="entry name" value="NDH1_NuoM"/>
    <property type="match status" value="1"/>
</dbReference>
<dbReference type="InterPro" id="IPR022997">
    <property type="entry name" value="NADH_Q_OxRdtase_chain4"/>
</dbReference>
<dbReference type="InterPro" id="IPR010227">
    <property type="entry name" value="NADH_Q_OxRdtase_chainM/4"/>
</dbReference>
<dbReference type="InterPro" id="IPR003918">
    <property type="entry name" value="NADH_UbQ_OxRdtase"/>
</dbReference>
<dbReference type="InterPro" id="IPR001750">
    <property type="entry name" value="ND/Mrp_TM"/>
</dbReference>
<dbReference type="NCBIfam" id="TIGR01972">
    <property type="entry name" value="NDH_I_M"/>
    <property type="match status" value="1"/>
</dbReference>
<dbReference type="NCBIfam" id="NF002713">
    <property type="entry name" value="PRK02546.1"/>
    <property type="match status" value="1"/>
</dbReference>
<dbReference type="NCBIfam" id="NF009212">
    <property type="entry name" value="PRK12561.1"/>
    <property type="match status" value="1"/>
</dbReference>
<dbReference type="PANTHER" id="PTHR43507:SF21">
    <property type="entry name" value="NAD(P)H-QUINONE OXIDOREDUCTASE CHAIN 4, CHLOROPLASTIC"/>
    <property type="match status" value="1"/>
</dbReference>
<dbReference type="PANTHER" id="PTHR43507">
    <property type="entry name" value="NADH-UBIQUINONE OXIDOREDUCTASE CHAIN 4"/>
    <property type="match status" value="1"/>
</dbReference>
<dbReference type="Pfam" id="PF00361">
    <property type="entry name" value="Proton_antipo_M"/>
    <property type="match status" value="1"/>
</dbReference>
<dbReference type="PRINTS" id="PR01437">
    <property type="entry name" value="NUOXDRDTASE4"/>
</dbReference>
<reference key="1">
    <citation type="journal article" date="2003" name="Proc. Natl. Acad. Sci. U.S.A.">
        <title>Genome sequence of the cyanobacterium Prochlorococcus marinus SS120, a nearly minimal oxyphototrophic genome.</title>
        <authorList>
            <person name="Dufresne A."/>
            <person name="Salanoubat M."/>
            <person name="Partensky F."/>
            <person name="Artiguenave F."/>
            <person name="Axmann I.M."/>
            <person name="Barbe V."/>
            <person name="Duprat S."/>
            <person name="Galperin M.Y."/>
            <person name="Koonin E.V."/>
            <person name="Le Gall F."/>
            <person name="Makarova K.S."/>
            <person name="Ostrowski M."/>
            <person name="Oztas S."/>
            <person name="Robert C."/>
            <person name="Rogozin I.B."/>
            <person name="Scanlan D.J."/>
            <person name="Tandeau de Marsac N."/>
            <person name="Weissenbach J."/>
            <person name="Wincker P."/>
            <person name="Wolf Y.I."/>
            <person name="Hess W.R."/>
        </authorList>
    </citation>
    <scope>NUCLEOTIDE SEQUENCE [LARGE SCALE GENOMIC DNA]</scope>
    <source>
        <strain>SARG / CCMP1375 / SS120</strain>
    </source>
</reference>
<name>NU4C_PROMA</name>
<sequence>MFDCEPVSLLITIPGQVPEPIAADFPWLSLSILFPIAGSLLVPFIPDEGEGKQVRWYALFIALTTFLITVGAYLKGFEPAEEGLQLSERVPWLPDLGLTWAVGADGLSMPLILLTSFITALAVLAAWPVSFKPKLFFFLILAMDGGQIAVFAVQDMLLFFLAWELELLPVYLLLAIWGGKKRQYAATKFIIYTAGSSLFILLAGLAMGFFGGGAPNFEFTHLANQQFGTGFQLLCYGGLLIAFGVKLPIVPLHTWLPDAHGEATAPVHMLLAGILLKMGGYALLRFNAQLLPAAHAQFAPLLIVLGVVNIIYAALTSFAQRNLKRKIAYSSISHMGFVLIGIGSFSTLGTSGAMLQMISHGLIGASLFFLVGATYDRTHTLQLNEMGGVGQKMRIMFALWTVCSLASLALPGMSGFVSELMVFAGLVTDEVYTLPFRIVIAGLAAIGVILTPIYLLSMLREIFFGQENVDLLAKRELVDAEPREIYIIGSLLVPIIGIGLYPRIMTETYTASIDGLVARDKLSIERVINTSSSEFSNQNISISNGQAPNLNIYSSSK</sequence>
<gene>
    <name evidence="1" type="primary">ndhD</name>
    <name type="ordered locus">Pro_0173</name>
</gene>
<comment type="function">
    <text evidence="1">NDH-1 shuttles electrons from NAD(P)H, via FMN and iron-sulfur (Fe-S) centers, to quinones in the respiratory chain. The immediate electron acceptor for the enzyme in this species is believed to be plastoquinone. Couples the redox reaction to proton translocation (for every two electrons transferred, four hydrogen ions are translocated across the cytoplasmic membrane), and thus conserves the redox energy in a proton gradient.</text>
</comment>
<comment type="catalytic activity">
    <reaction evidence="1">
        <text>a plastoquinone + NADH + (n+1) H(+)(in) = a plastoquinol + NAD(+) + n H(+)(out)</text>
        <dbReference type="Rhea" id="RHEA:42608"/>
        <dbReference type="Rhea" id="RHEA-COMP:9561"/>
        <dbReference type="Rhea" id="RHEA-COMP:9562"/>
        <dbReference type="ChEBI" id="CHEBI:15378"/>
        <dbReference type="ChEBI" id="CHEBI:17757"/>
        <dbReference type="ChEBI" id="CHEBI:57540"/>
        <dbReference type="ChEBI" id="CHEBI:57945"/>
        <dbReference type="ChEBI" id="CHEBI:62192"/>
    </reaction>
</comment>
<comment type="catalytic activity">
    <reaction evidence="1">
        <text>a plastoquinone + NADPH + (n+1) H(+)(in) = a plastoquinol + NADP(+) + n H(+)(out)</text>
        <dbReference type="Rhea" id="RHEA:42612"/>
        <dbReference type="Rhea" id="RHEA-COMP:9561"/>
        <dbReference type="Rhea" id="RHEA-COMP:9562"/>
        <dbReference type="ChEBI" id="CHEBI:15378"/>
        <dbReference type="ChEBI" id="CHEBI:17757"/>
        <dbReference type="ChEBI" id="CHEBI:57783"/>
        <dbReference type="ChEBI" id="CHEBI:58349"/>
        <dbReference type="ChEBI" id="CHEBI:62192"/>
    </reaction>
</comment>
<comment type="subcellular location">
    <subcellularLocation>
        <location evidence="1">Cellular thylakoid membrane</location>
        <topology evidence="1">Multi-pass membrane protein</topology>
    </subcellularLocation>
</comment>
<comment type="similarity">
    <text evidence="1">Belongs to the complex I subunit 4 family.</text>
</comment>
<protein>
    <recommendedName>
        <fullName evidence="1">NAD(P)H-quinone oxidoreductase chain 4</fullName>
        <ecNumber evidence="1">7.1.1.-</ecNumber>
    </recommendedName>
    <alternativeName>
        <fullName evidence="1">NAD(P)H dehydrogenase I, chain 4</fullName>
    </alternativeName>
    <alternativeName>
        <fullName evidence="1">NDH-1, chain 4</fullName>
    </alternativeName>
</protein>
<feature type="chain" id="PRO_0000343234" description="NAD(P)H-quinone oxidoreductase chain 4">
    <location>
        <begin position="1"/>
        <end position="557"/>
    </location>
</feature>
<feature type="transmembrane region" description="Helical" evidence="1">
    <location>
        <begin position="25"/>
        <end position="45"/>
    </location>
</feature>
<feature type="transmembrane region" description="Helical" evidence="1">
    <location>
        <begin position="57"/>
        <end position="77"/>
    </location>
</feature>
<feature type="transmembrane region" description="Helical" evidence="1">
    <location>
        <begin position="111"/>
        <end position="131"/>
    </location>
</feature>
<feature type="transmembrane region" description="Helical" evidence="1">
    <location>
        <begin position="133"/>
        <end position="153"/>
    </location>
</feature>
<feature type="transmembrane region" description="Helical" evidence="1">
    <location>
        <begin position="157"/>
        <end position="177"/>
    </location>
</feature>
<feature type="transmembrane region" description="Helical" evidence="1">
    <location>
        <begin position="189"/>
        <end position="209"/>
    </location>
</feature>
<feature type="transmembrane region" description="Helical" evidence="1">
    <location>
        <begin position="230"/>
        <end position="250"/>
    </location>
</feature>
<feature type="transmembrane region" description="Helical" evidence="1">
    <location>
        <begin position="264"/>
        <end position="284"/>
    </location>
</feature>
<feature type="transmembrane region" description="Helical" evidence="1">
    <location>
        <begin position="298"/>
        <end position="318"/>
    </location>
</feature>
<feature type="transmembrane region" description="Helical" evidence="1">
    <location>
        <begin position="327"/>
        <end position="347"/>
    </location>
</feature>
<feature type="transmembrane region" description="Helical" evidence="1">
    <location>
        <begin position="353"/>
        <end position="373"/>
    </location>
</feature>
<feature type="transmembrane region" description="Helical" evidence="1">
    <location>
        <begin position="397"/>
        <end position="417"/>
    </location>
</feature>
<feature type="transmembrane region" description="Helical" evidence="1">
    <location>
        <begin position="438"/>
        <end position="458"/>
    </location>
</feature>
<feature type="transmembrane region" description="Helical" evidence="1">
    <location>
        <begin position="485"/>
        <end position="505"/>
    </location>
</feature>
<organism>
    <name type="scientific">Prochlorococcus marinus (strain SARG / CCMP1375 / SS120)</name>
    <dbReference type="NCBI Taxonomy" id="167539"/>
    <lineage>
        <taxon>Bacteria</taxon>
        <taxon>Bacillati</taxon>
        <taxon>Cyanobacteriota</taxon>
        <taxon>Cyanophyceae</taxon>
        <taxon>Synechococcales</taxon>
        <taxon>Prochlorococcaceae</taxon>
        <taxon>Prochlorococcus</taxon>
    </lineage>
</organism>
<proteinExistence type="inferred from homology"/>
<accession>Q7VE41</accession>
<evidence type="ECO:0000255" key="1">
    <source>
        <dbReference type="HAMAP-Rule" id="MF_00491"/>
    </source>
</evidence>
<keyword id="KW-0472">Membrane</keyword>
<keyword id="KW-0520">NAD</keyword>
<keyword id="KW-0521">NADP</keyword>
<keyword id="KW-0618">Plastoquinone</keyword>
<keyword id="KW-0874">Quinone</keyword>
<keyword id="KW-1185">Reference proteome</keyword>
<keyword id="KW-0793">Thylakoid</keyword>
<keyword id="KW-1278">Translocase</keyword>
<keyword id="KW-0812">Transmembrane</keyword>
<keyword id="KW-1133">Transmembrane helix</keyword>